<feature type="chain" id="PRO_0000221574" description="Trichodiene synthase">
    <location>
        <begin position="1"/>
        <end position="375"/>
    </location>
</feature>
<feature type="sequence variant" description="In strain: NRRL 26156.">
    <original>E</original>
    <variation>K</variation>
    <location>
        <position position="320"/>
    </location>
</feature>
<dbReference type="EC" id="4.2.3.6"/>
<dbReference type="EMBL" id="AY102575">
    <property type="protein sequence ID" value="AAM48814.1"/>
    <property type="molecule type" value="Genomic_DNA"/>
</dbReference>
<dbReference type="EMBL" id="AY102590">
    <property type="protein sequence ID" value="AAM48934.1"/>
    <property type="molecule type" value="Genomic_DNA"/>
</dbReference>
<dbReference type="EMBL" id="AY102604">
    <property type="protein sequence ID" value="AAM49046.1"/>
    <property type="molecule type" value="Genomic_DNA"/>
</dbReference>
<dbReference type="SMR" id="Q8NIH6"/>
<dbReference type="UniPathway" id="UPA00267"/>
<dbReference type="GO" id="GO:0045482">
    <property type="term" value="F:trichodiene synthase activity"/>
    <property type="evidence" value="ECO:0007669"/>
    <property type="project" value="UniProtKB-EC"/>
</dbReference>
<dbReference type="GO" id="GO:0016106">
    <property type="term" value="P:sesquiterpenoid biosynthetic process"/>
    <property type="evidence" value="ECO:0007669"/>
    <property type="project" value="InterPro"/>
</dbReference>
<dbReference type="Gene3D" id="1.10.600.10">
    <property type="entry name" value="Farnesyl Diphosphate Synthase"/>
    <property type="match status" value="1"/>
</dbReference>
<dbReference type="InterPro" id="IPR008949">
    <property type="entry name" value="Isoprenoid_synthase_dom_sf"/>
</dbReference>
<dbReference type="InterPro" id="IPR010458">
    <property type="entry name" value="TRI5_ascomyc"/>
</dbReference>
<dbReference type="InterPro" id="IPR024652">
    <property type="entry name" value="Trichodiene_synth"/>
</dbReference>
<dbReference type="Pfam" id="PF06330">
    <property type="entry name" value="TRI5"/>
    <property type="match status" value="1"/>
</dbReference>
<dbReference type="PIRSF" id="PIRSF001388">
    <property type="entry name" value="TRI5"/>
    <property type="match status" value="1"/>
</dbReference>
<dbReference type="SFLD" id="SFLDS00005">
    <property type="entry name" value="Isoprenoid_Synthase_Type_I"/>
    <property type="match status" value="1"/>
</dbReference>
<dbReference type="SFLD" id="SFLDG01021">
    <property type="entry name" value="Trichodiene_Synthase_Like"/>
    <property type="match status" value="1"/>
</dbReference>
<dbReference type="SUPFAM" id="SSF48576">
    <property type="entry name" value="Terpenoid synthases"/>
    <property type="match status" value="1"/>
</dbReference>
<comment type="function">
    <text>TS is a member of the terpene cyclase group of enzymes. It catalyzes the isomerization and cyclization of farnesyl pyro-phosphate to form trichodiene, the first cyclic intermediate in the biosynthetic pathway for trichothecenes. It serves to branch trichothecene biosynthesis from the isoprenoid pathway.</text>
</comment>
<comment type="catalytic activity">
    <reaction>
        <text>(2E,6E)-farnesyl diphosphate = trichodiene + diphosphate</text>
        <dbReference type="Rhea" id="RHEA:12052"/>
        <dbReference type="ChEBI" id="CHEBI:15861"/>
        <dbReference type="ChEBI" id="CHEBI:33019"/>
        <dbReference type="ChEBI" id="CHEBI:175763"/>
        <dbReference type="EC" id="4.2.3.6"/>
    </reaction>
</comment>
<comment type="pathway">
    <text>Sesquiterpene biosynthesis; trichothecene biosynthesis.</text>
</comment>
<comment type="miscellaneous">
    <text>Trichothecenes are sesquiterpenoid toxins that act by inhibiting protein biosynthesis.</text>
</comment>
<comment type="similarity">
    <text evidence="1">Belongs to the trichodiene synthase family.</text>
</comment>
<gene>
    <name type="primary">TRI5</name>
</gene>
<sequence>MENFPTEYFLNTSVRLLEYIRYRDSNYTREERIENLHYAYNKAAHHFAQPRQQQMLKVDPKRLQASLQTIVGMVVYSWAKVSKECMADLSIHYTYTLVLDDSSDDPHPAMLNYFDDLQAGREQAHPWWALVNEHFPNVLRHFGPFCSLNLIRSTMDFFEGCWIEQYNFGGFPGSDDYPQFLRRMNGLGHCVGASLWPKELFDERKNFLEITTAVAQMENWMVWVNDLMSFYKEFDDERDQISLVKNFVTCHEITLDEALEKLTQETLHSSKQMVAVFADKDPQVMDTIECFMHGYVTWHLCDARYRLHEIYEKVKDQDTEDAKKFCKFFEQAANVGAVAPSEWAYPQVAHLANVRAKGDVKEAQKPILSSIELVE</sequence>
<protein>
    <recommendedName>
        <fullName>Trichodiene synthase</fullName>
        <ecNumber>4.2.3.6</ecNumber>
    </recommendedName>
    <alternativeName>
        <fullName>Sesquiterpene cyclase</fullName>
        <shortName>TS</shortName>
    </alternativeName>
</protein>
<evidence type="ECO:0000305" key="1"/>
<accession>Q8NIH6</accession>
<accession>Q8NJE4</accession>
<proteinExistence type="inferred from homology"/>
<organism>
    <name type="scientific">Fusarium asiaticum</name>
    <dbReference type="NCBI Taxonomy" id="282267"/>
    <lineage>
        <taxon>Eukaryota</taxon>
        <taxon>Fungi</taxon>
        <taxon>Dikarya</taxon>
        <taxon>Ascomycota</taxon>
        <taxon>Pezizomycotina</taxon>
        <taxon>Sordariomycetes</taxon>
        <taxon>Hypocreomycetidae</taxon>
        <taxon>Hypocreales</taxon>
        <taxon>Nectriaceae</taxon>
        <taxon>Fusarium</taxon>
    </lineage>
</organism>
<reference key="1">
    <citation type="journal article" date="2002" name="Proc. Natl. Acad. Sci. U.S.A.">
        <title>Ancestral polymorphism and adaptive evolution in the trichothecene mycotoxin gene cluster of phytopathogenic Fusarium.</title>
        <authorList>
            <person name="Ward T.J."/>
            <person name="Bielawski J.P."/>
            <person name="Kistler H.C."/>
            <person name="Sullivan E."/>
            <person name="O'Donnell K."/>
        </authorList>
    </citation>
    <scope>NUCLEOTIDE SEQUENCE [GENOMIC DNA]</scope>
    <source>
        <strain>ATCC 28114 / CBS 110256 / NRRL 6101</strain>
        <strain>CBS 110258 / DAOM 211601 / NRRL 26156</strain>
        <strain>CBS 110259 / FRC-R-9402 / NRRL 28720</strain>
    </source>
</reference>
<keyword id="KW-0456">Lyase</keyword>
<name>TRI5_FUSAS</name>